<proteinExistence type="inferred from homology"/>
<accession>A9M124</accession>
<name>ATPE_NEIM0</name>
<dbReference type="EMBL" id="CP000381">
    <property type="protein sequence ID" value="ABX72493.1"/>
    <property type="molecule type" value="Genomic_DNA"/>
</dbReference>
<dbReference type="RefSeq" id="WP_002237118.1">
    <property type="nucleotide sequence ID" value="NC_010120.1"/>
</dbReference>
<dbReference type="SMR" id="A9M124"/>
<dbReference type="KEGG" id="nmn:NMCC_0285"/>
<dbReference type="HOGENOM" id="CLU_084338_2_0_4"/>
<dbReference type="Proteomes" id="UP000001177">
    <property type="component" value="Chromosome"/>
</dbReference>
<dbReference type="GO" id="GO:0005886">
    <property type="term" value="C:plasma membrane"/>
    <property type="evidence" value="ECO:0007669"/>
    <property type="project" value="UniProtKB-SubCell"/>
</dbReference>
<dbReference type="GO" id="GO:0045259">
    <property type="term" value="C:proton-transporting ATP synthase complex"/>
    <property type="evidence" value="ECO:0007669"/>
    <property type="project" value="UniProtKB-KW"/>
</dbReference>
<dbReference type="GO" id="GO:0005524">
    <property type="term" value="F:ATP binding"/>
    <property type="evidence" value="ECO:0007669"/>
    <property type="project" value="UniProtKB-UniRule"/>
</dbReference>
<dbReference type="GO" id="GO:0046933">
    <property type="term" value="F:proton-transporting ATP synthase activity, rotational mechanism"/>
    <property type="evidence" value="ECO:0007669"/>
    <property type="project" value="UniProtKB-UniRule"/>
</dbReference>
<dbReference type="CDD" id="cd12152">
    <property type="entry name" value="F1-ATPase_delta"/>
    <property type="match status" value="1"/>
</dbReference>
<dbReference type="FunFam" id="2.60.15.10:FF:000012">
    <property type="entry name" value="ATP synthase epsilon chain"/>
    <property type="match status" value="1"/>
</dbReference>
<dbReference type="Gene3D" id="2.60.15.10">
    <property type="entry name" value="F0F1 ATP synthase delta/epsilon subunit, N-terminal"/>
    <property type="match status" value="1"/>
</dbReference>
<dbReference type="HAMAP" id="MF_00530">
    <property type="entry name" value="ATP_synth_epsil_bac"/>
    <property type="match status" value="1"/>
</dbReference>
<dbReference type="InterPro" id="IPR036794">
    <property type="entry name" value="ATP_F1_dsu/esu_C_sf"/>
</dbReference>
<dbReference type="InterPro" id="IPR001469">
    <property type="entry name" value="ATP_synth_F1_dsu/esu"/>
</dbReference>
<dbReference type="InterPro" id="IPR020546">
    <property type="entry name" value="ATP_synth_F1_dsu/esu_N"/>
</dbReference>
<dbReference type="InterPro" id="IPR020547">
    <property type="entry name" value="ATP_synth_F1_esu_C"/>
</dbReference>
<dbReference type="InterPro" id="IPR036771">
    <property type="entry name" value="ATPsynth_dsu/esu_N"/>
</dbReference>
<dbReference type="NCBIfam" id="TIGR01216">
    <property type="entry name" value="ATP_synt_epsi"/>
    <property type="match status" value="1"/>
</dbReference>
<dbReference type="NCBIfam" id="NF001847">
    <property type="entry name" value="PRK00571.1-4"/>
    <property type="match status" value="1"/>
</dbReference>
<dbReference type="NCBIfam" id="NF009977">
    <property type="entry name" value="PRK13442.1"/>
    <property type="match status" value="1"/>
</dbReference>
<dbReference type="PANTHER" id="PTHR13822">
    <property type="entry name" value="ATP SYNTHASE DELTA/EPSILON CHAIN"/>
    <property type="match status" value="1"/>
</dbReference>
<dbReference type="PANTHER" id="PTHR13822:SF10">
    <property type="entry name" value="ATP SYNTHASE EPSILON CHAIN, CHLOROPLASTIC"/>
    <property type="match status" value="1"/>
</dbReference>
<dbReference type="Pfam" id="PF00401">
    <property type="entry name" value="ATP-synt_DE"/>
    <property type="match status" value="1"/>
</dbReference>
<dbReference type="Pfam" id="PF02823">
    <property type="entry name" value="ATP-synt_DE_N"/>
    <property type="match status" value="1"/>
</dbReference>
<dbReference type="SUPFAM" id="SSF46604">
    <property type="entry name" value="Epsilon subunit of F1F0-ATP synthase C-terminal domain"/>
    <property type="match status" value="1"/>
</dbReference>
<dbReference type="SUPFAM" id="SSF51344">
    <property type="entry name" value="Epsilon subunit of F1F0-ATP synthase N-terminal domain"/>
    <property type="match status" value="1"/>
</dbReference>
<gene>
    <name evidence="1" type="primary">atpC</name>
    <name type="ordered locus">NMCC_0285</name>
</gene>
<comment type="function">
    <text evidence="1">Produces ATP from ADP in the presence of a proton gradient across the membrane.</text>
</comment>
<comment type="subunit">
    <text evidence="1">F-type ATPases have 2 components, CF(1) - the catalytic core - and CF(0) - the membrane proton channel. CF(1) has five subunits: alpha(3), beta(3), gamma(1), delta(1), epsilon(1). CF(0) has three main subunits: a, b and c.</text>
</comment>
<comment type="subcellular location">
    <subcellularLocation>
        <location evidence="1">Cell inner membrane</location>
        <topology evidence="1">Peripheral membrane protein</topology>
    </subcellularLocation>
</comment>
<comment type="similarity">
    <text evidence="1">Belongs to the ATPase epsilon chain family.</text>
</comment>
<sequence>MSIMEVEVVSSEQKIYSGEATFIVVPTVQGELGIYPRHEPIMSLVRPGALRLTVPGEDKEVLVAVSGGVLEVQPDKVTVLADVAVRSAEMDQARAEEAKKAAEAGISQAKDDKALAEAHKALAAAIAQLKTLDYIRSHKK</sequence>
<evidence type="ECO:0000255" key="1">
    <source>
        <dbReference type="HAMAP-Rule" id="MF_00530"/>
    </source>
</evidence>
<feature type="chain" id="PRO_1000081738" description="ATP synthase epsilon chain">
    <location>
        <begin position="1"/>
        <end position="140"/>
    </location>
</feature>
<reference key="1">
    <citation type="journal article" date="2008" name="Genomics">
        <title>Characterization of ST-4821 complex, a unique Neisseria meningitidis clone.</title>
        <authorList>
            <person name="Peng J."/>
            <person name="Yang L."/>
            <person name="Yang F."/>
            <person name="Yang J."/>
            <person name="Yan Y."/>
            <person name="Nie H."/>
            <person name="Zhang X."/>
            <person name="Xiong Z."/>
            <person name="Jiang Y."/>
            <person name="Cheng F."/>
            <person name="Xu X."/>
            <person name="Chen S."/>
            <person name="Sun L."/>
            <person name="Li W."/>
            <person name="Shen Y."/>
            <person name="Shao Z."/>
            <person name="Liang X."/>
            <person name="Xu J."/>
            <person name="Jin Q."/>
        </authorList>
    </citation>
    <scope>NUCLEOTIDE SEQUENCE [LARGE SCALE GENOMIC DNA]</scope>
    <source>
        <strain>053442</strain>
    </source>
</reference>
<protein>
    <recommendedName>
        <fullName evidence="1">ATP synthase epsilon chain</fullName>
    </recommendedName>
    <alternativeName>
        <fullName evidence="1">ATP synthase F1 sector epsilon subunit</fullName>
    </alternativeName>
    <alternativeName>
        <fullName evidence="1">F-ATPase epsilon subunit</fullName>
    </alternativeName>
</protein>
<organism>
    <name type="scientific">Neisseria meningitidis serogroup C (strain 053442)</name>
    <dbReference type="NCBI Taxonomy" id="374833"/>
    <lineage>
        <taxon>Bacteria</taxon>
        <taxon>Pseudomonadati</taxon>
        <taxon>Pseudomonadota</taxon>
        <taxon>Betaproteobacteria</taxon>
        <taxon>Neisseriales</taxon>
        <taxon>Neisseriaceae</taxon>
        <taxon>Neisseria</taxon>
    </lineage>
</organism>
<keyword id="KW-0066">ATP synthesis</keyword>
<keyword id="KW-0997">Cell inner membrane</keyword>
<keyword id="KW-1003">Cell membrane</keyword>
<keyword id="KW-0139">CF(1)</keyword>
<keyword id="KW-0375">Hydrogen ion transport</keyword>
<keyword id="KW-0406">Ion transport</keyword>
<keyword id="KW-0472">Membrane</keyword>
<keyword id="KW-0813">Transport</keyword>